<organism>
    <name type="scientific">His1 virus (isolate Australia/Victoria)</name>
    <name type="common">His1V</name>
    <name type="synonym">Haloarcula hispanica virus 1</name>
    <dbReference type="NCBI Taxonomy" id="654912"/>
    <lineage>
        <taxon>Viruses</taxon>
        <taxon>Viruses incertae sedis</taxon>
        <taxon>Halspiviridae</taxon>
        <taxon>Salterprovirus</taxon>
        <taxon>Salterprovirus His1</taxon>
    </lineage>
</organism>
<proteinExistence type="predicted"/>
<keyword id="KW-1185">Reference proteome</keyword>
<feature type="chain" id="PRO_0000384886" description="Uncharacterized protein ORF18">
    <location>
        <begin position="1"/>
        <end position="145"/>
    </location>
</feature>
<feature type="region of interest" description="Disordered" evidence="1">
    <location>
        <begin position="1"/>
        <end position="25"/>
    </location>
</feature>
<feature type="compositionally biased region" description="Basic and acidic residues" evidence="1">
    <location>
        <begin position="14"/>
        <end position="25"/>
    </location>
</feature>
<reference key="1">
    <citation type="journal article" date="2006" name="Virology">
        <title>His1 and His2 are distantly related, spindle-shaped haloviruses belonging to the novel virus group, Salterprovirus.</title>
        <authorList>
            <person name="Bath C."/>
            <person name="Cukalac T."/>
            <person name="Porter K."/>
            <person name="Dyall-Smith M.L."/>
        </authorList>
    </citation>
    <scope>NUCLEOTIDE SEQUENCE [GENOMIC DNA]</scope>
</reference>
<organismHost>
    <name type="scientific">Haloarcula hispanica</name>
    <dbReference type="NCBI Taxonomy" id="51589"/>
</organismHost>
<evidence type="ECO:0000256" key="1">
    <source>
        <dbReference type="SAM" id="MobiDB-lite"/>
    </source>
</evidence>
<sequence length="145" mass="16493">MSENNENDGFNLDPDVKEELEETKSEEDIIGMYQTDGSNSEKVPVLKSWLPDSDKWQAKTVVNEREARLMAVARNLTEAYDEIEHMQPFIEGLITDLEMYKTSVDGMAREQQKSVLMAMFGRSSEAQESQSMLMSMIAGKQDNDD</sequence>
<dbReference type="EMBL" id="AF191796">
    <property type="protein sequence ID" value="AAQ13733.1"/>
    <property type="molecule type" value="Genomic_DNA"/>
</dbReference>
<dbReference type="RefSeq" id="YP_529530.1">
    <property type="nucleotide sequence ID" value="NC_007914.1"/>
</dbReference>
<dbReference type="KEGG" id="vg:5142411"/>
<dbReference type="Proteomes" id="UP000007024">
    <property type="component" value="Segment"/>
</dbReference>
<gene>
    <name type="ORF">ORF18</name>
</gene>
<name>Y018_HIS1I</name>
<accession>Q25BH7</accession>
<protein>
    <recommendedName>
        <fullName>Uncharacterized protein ORF18</fullName>
    </recommendedName>
</protein>